<protein>
    <recommendedName>
        <fullName evidence="1">Small ribosomal subunit protein uS13</fullName>
    </recommendedName>
    <alternativeName>
        <fullName evidence="3">30S ribosomal protein S13</fullName>
    </alternativeName>
</protein>
<accession>P0CE04</accession>
<accession>Q46448</accession>
<accession>Q46454</accession>
<evidence type="ECO:0000255" key="1">
    <source>
        <dbReference type="HAMAP-Rule" id="MF_01315"/>
    </source>
</evidence>
<evidence type="ECO:0000256" key="2">
    <source>
        <dbReference type="SAM" id="MobiDB-lite"/>
    </source>
</evidence>
<evidence type="ECO:0000305" key="3"/>
<dbReference type="EMBL" id="AE001273">
    <property type="protein sequence ID" value="AAC68110.1"/>
    <property type="molecule type" value="Genomic_DNA"/>
</dbReference>
<dbReference type="PIR" id="I40744">
    <property type="entry name" value="I40744"/>
</dbReference>
<dbReference type="RefSeq" id="NP_220024.1">
    <property type="nucleotide sequence ID" value="NC_000117.1"/>
</dbReference>
<dbReference type="RefSeq" id="WP_009871873.1">
    <property type="nucleotide sequence ID" value="NC_000117.1"/>
</dbReference>
<dbReference type="SMR" id="P0CE04"/>
<dbReference type="FunCoup" id="P0CE04">
    <property type="interactions" value="279"/>
</dbReference>
<dbReference type="STRING" id="272561.CT_509"/>
<dbReference type="EnsemblBacteria" id="AAC68110">
    <property type="protein sequence ID" value="AAC68110"/>
    <property type="gene ID" value="CT_509"/>
</dbReference>
<dbReference type="GeneID" id="884285"/>
<dbReference type="KEGG" id="ctr:CT_509"/>
<dbReference type="PATRIC" id="fig|272561.5.peg.553"/>
<dbReference type="HOGENOM" id="CLU_103849_1_2_0"/>
<dbReference type="InParanoid" id="P0CE04"/>
<dbReference type="OrthoDB" id="9803610at2"/>
<dbReference type="Proteomes" id="UP000000431">
    <property type="component" value="Chromosome"/>
</dbReference>
<dbReference type="GO" id="GO:0005829">
    <property type="term" value="C:cytosol"/>
    <property type="evidence" value="ECO:0000318"/>
    <property type="project" value="GO_Central"/>
</dbReference>
<dbReference type="GO" id="GO:0015935">
    <property type="term" value="C:small ribosomal subunit"/>
    <property type="evidence" value="ECO:0000318"/>
    <property type="project" value="GO_Central"/>
</dbReference>
<dbReference type="GO" id="GO:0019843">
    <property type="term" value="F:rRNA binding"/>
    <property type="evidence" value="ECO:0007669"/>
    <property type="project" value="UniProtKB-UniRule"/>
</dbReference>
<dbReference type="GO" id="GO:0003735">
    <property type="term" value="F:structural constituent of ribosome"/>
    <property type="evidence" value="ECO:0007669"/>
    <property type="project" value="InterPro"/>
</dbReference>
<dbReference type="GO" id="GO:0000049">
    <property type="term" value="F:tRNA binding"/>
    <property type="evidence" value="ECO:0007669"/>
    <property type="project" value="UniProtKB-UniRule"/>
</dbReference>
<dbReference type="GO" id="GO:0006412">
    <property type="term" value="P:translation"/>
    <property type="evidence" value="ECO:0007669"/>
    <property type="project" value="UniProtKB-UniRule"/>
</dbReference>
<dbReference type="FunFam" id="1.10.8.50:FF:000001">
    <property type="entry name" value="30S ribosomal protein S13"/>
    <property type="match status" value="1"/>
</dbReference>
<dbReference type="FunFam" id="4.10.910.10:FF:000001">
    <property type="entry name" value="30S ribosomal protein S13"/>
    <property type="match status" value="1"/>
</dbReference>
<dbReference type="Gene3D" id="1.10.8.50">
    <property type="match status" value="1"/>
</dbReference>
<dbReference type="Gene3D" id="4.10.910.10">
    <property type="entry name" value="30s ribosomal protein s13, domain 2"/>
    <property type="match status" value="1"/>
</dbReference>
<dbReference type="HAMAP" id="MF_01315">
    <property type="entry name" value="Ribosomal_uS13"/>
    <property type="match status" value="1"/>
</dbReference>
<dbReference type="InterPro" id="IPR027437">
    <property type="entry name" value="Rbsml_uS13_C"/>
</dbReference>
<dbReference type="InterPro" id="IPR001892">
    <property type="entry name" value="Ribosomal_uS13"/>
</dbReference>
<dbReference type="InterPro" id="IPR010979">
    <property type="entry name" value="Ribosomal_uS13-like_H2TH"/>
</dbReference>
<dbReference type="InterPro" id="IPR019980">
    <property type="entry name" value="Ribosomal_uS13_bac-type"/>
</dbReference>
<dbReference type="InterPro" id="IPR018269">
    <property type="entry name" value="Ribosomal_uS13_CS"/>
</dbReference>
<dbReference type="NCBIfam" id="TIGR03631">
    <property type="entry name" value="uS13_bact"/>
    <property type="match status" value="1"/>
</dbReference>
<dbReference type="PANTHER" id="PTHR10871">
    <property type="entry name" value="30S RIBOSOMAL PROTEIN S13/40S RIBOSOMAL PROTEIN S18"/>
    <property type="match status" value="1"/>
</dbReference>
<dbReference type="PANTHER" id="PTHR10871:SF1">
    <property type="entry name" value="SMALL RIBOSOMAL SUBUNIT PROTEIN US13M"/>
    <property type="match status" value="1"/>
</dbReference>
<dbReference type="Pfam" id="PF00416">
    <property type="entry name" value="Ribosomal_S13"/>
    <property type="match status" value="1"/>
</dbReference>
<dbReference type="PIRSF" id="PIRSF002134">
    <property type="entry name" value="Ribosomal_S13"/>
    <property type="match status" value="1"/>
</dbReference>
<dbReference type="SUPFAM" id="SSF46946">
    <property type="entry name" value="S13-like H2TH domain"/>
    <property type="match status" value="1"/>
</dbReference>
<dbReference type="PROSITE" id="PS00646">
    <property type="entry name" value="RIBOSOMAL_S13_1"/>
    <property type="match status" value="1"/>
</dbReference>
<dbReference type="PROSITE" id="PS50159">
    <property type="entry name" value="RIBOSOMAL_S13_2"/>
    <property type="match status" value="1"/>
</dbReference>
<sequence length="122" mass="13881">MPRIIGIDIPAKKKLKISLTYIYGIGPALSKEIIARLQLNPEARAAELTEEEVGRLNALLQSDYVVEGDLRRRVQSDIKRLITIHAYRGQRHRLSLPVRGQRTKTNSRTRKGKRKTVAGKKK</sequence>
<gene>
    <name evidence="1" type="primary">rpsM</name>
    <name type="synonym">rs13</name>
    <name type="ordered locus">CT_509</name>
</gene>
<comment type="function">
    <text evidence="1">Located at the top of the head of the 30S subunit, it contacts several helices of the 16S rRNA. In the 70S ribosome it contacts the 23S rRNA (bridge B1a) and protein L5 of the 50S subunit (bridge B1b), connecting the 2 subunits; these bridges are implicated in subunit movement. Contacts the tRNAs in the A and P-sites.</text>
</comment>
<comment type="subunit">
    <text evidence="1">Part of the 30S ribosomal subunit. Forms a loose heterodimer with protein S19. Forms two bridges to the 50S subunit in the 70S ribosome.</text>
</comment>
<comment type="similarity">
    <text evidence="1">Belongs to the universal ribosomal protein uS13 family.</text>
</comment>
<name>RS13_CHLTR</name>
<organism>
    <name type="scientific">Chlamydia trachomatis serovar D (strain ATCC VR-885 / DSM 19411 / UW-3/Cx)</name>
    <dbReference type="NCBI Taxonomy" id="272561"/>
    <lineage>
        <taxon>Bacteria</taxon>
        <taxon>Pseudomonadati</taxon>
        <taxon>Chlamydiota</taxon>
        <taxon>Chlamydiia</taxon>
        <taxon>Chlamydiales</taxon>
        <taxon>Chlamydiaceae</taxon>
        <taxon>Chlamydia/Chlamydophila group</taxon>
        <taxon>Chlamydia</taxon>
    </lineage>
</organism>
<keyword id="KW-1185">Reference proteome</keyword>
<keyword id="KW-0687">Ribonucleoprotein</keyword>
<keyword id="KW-0689">Ribosomal protein</keyword>
<keyword id="KW-0694">RNA-binding</keyword>
<keyword id="KW-0699">rRNA-binding</keyword>
<keyword id="KW-0820">tRNA-binding</keyword>
<reference key="1">
    <citation type="journal article" date="1998" name="Science">
        <title>Genome sequence of an obligate intracellular pathogen of humans: Chlamydia trachomatis.</title>
        <authorList>
            <person name="Stephens R.S."/>
            <person name="Kalman S."/>
            <person name="Lammel C.J."/>
            <person name="Fan J."/>
            <person name="Marathe R."/>
            <person name="Aravind L."/>
            <person name="Mitchell W.P."/>
            <person name="Olinger L."/>
            <person name="Tatusov R.L."/>
            <person name="Zhao Q."/>
            <person name="Koonin E.V."/>
            <person name="Davis R.W."/>
        </authorList>
    </citation>
    <scope>NUCLEOTIDE SEQUENCE [LARGE SCALE GENOMIC DNA]</scope>
    <source>
        <strain>ATCC VR-885 / DSM 19411 / UW-3/Cx</strain>
    </source>
</reference>
<feature type="chain" id="PRO_0000132081" description="Small ribosomal subunit protein uS13">
    <location>
        <begin position="1"/>
        <end position="122"/>
    </location>
</feature>
<feature type="region of interest" description="Disordered" evidence="2">
    <location>
        <begin position="94"/>
        <end position="122"/>
    </location>
</feature>
<feature type="compositionally biased region" description="Basic residues" evidence="2">
    <location>
        <begin position="101"/>
        <end position="122"/>
    </location>
</feature>
<proteinExistence type="inferred from homology"/>